<reference evidence="5" key="1">
    <citation type="journal article" date="2009" name="J. Bacteriol.">
        <title>Complete genome sequence of Rhodobacter sphaeroides KD131.</title>
        <authorList>
            <person name="Lim S.-K."/>
            <person name="Kim S.J."/>
            <person name="Cha S.H."/>
            <person name="Oh Y.-K."/>
            <person name="Rhee H.-J."/>
            <person name="Kim M.-S."/>
            <person name="Lee J.K."/>
        </authorList>
    </citation>
    <scope>NUCLEOTIDE SEQUENCE [LARGE SCALE GENOMIC DNA]</scope>
    <source>
        <strain>KD131 / KCTC 12085</strain>
    </source>
</reference>
<gene>
    <name evidence="2" type="primary">mcl2</name>
    <name type="ordered locus">RSKD131_2362</name>
</gene>
<dbReference type="EC" id="3.1.2.30"/>
<dbReference type="EMBL" id="CP001150">
    <property type="protein sequence ID" value="ACM02222.1"/>
    <property type="molecule type" value="Genomic_DNA"/>
</dbReference>
<dbReference type="RefSeq" id="WP_015921374.1">
    <property type="nucleotide sequence ID" value="NC_011963.1"/>
</dbReference>
<dbReference type="SMR" id="B9KNB6"/>
<dbReference type="GeneID" id="67447741"/>
<dbReference type="KEGG" id="rsk:RSKD131_2362"/>
<dbReference type="HOGENOM" id="CLU_044864_0_1_5"/>
<dbReference type="GO" id="GO:0016787">
    <property type="term" value="F:hydrolase activity"/>
    <property type="evidence" value="ECO:0007669"/>
    <property type="project" value="UniProtKB-KW"/>
</dbReference>
<dbReference type="GO" id="GO:0000287">
    <property type="term" value="F:magnesium ion binding"/>
    <property type="evidence" value="ECO:0007669"/>
    <property type="project" value="TreeGrafter"/>
</dbReference>
<dbReference type="GO" id="GO:0006107">
    <property type="term" value="P:oxaloacetate metabolic process"/>
    <property type="evidence" value="ECO:0007669"/>
    <property type="project" value="TreeGrafter"/>
</dbReference>
<dbReference type="Gene3D" id="3.20.20.60">
    <property type="entry name" value="Phosphoenolpyruvate-binding domains"/>
    <property type="match status" value="1"/>
</dbReference>
<dbReference type="InterPro" id="IPR005000">
    <property type="entry name" value="Aldolase/citrate-lyase_domain"/>
</dbReference>
<dbReference type="InterPro" id="IPR011206">
    <property type="entry name" value="Citrate_lyase_beta/mcl1/mcl2"/>
</dbReference>
<dbReference type="InterPro" id="IPR015813">
    <property type="entry name" value="Pyrv/PenolPyrv_kinase-like_dom"/>
</dbReference>
<dbReference type="InterPro" id="IPR040442">
    <property type="entry name" value="Pyrv_kinase-like_dom_sf"/>
</dbReference>
<dbReference type="PANTHER" id="PTHR32308:SF10">
    <property type="entry name" value="CITRATE LYASE SUBUNIT BETA"/>
    <property type="match status" value="1"/>
</dbReference>
<dbReference type="PANTHER" id="PTHR32308">
    <property type="entry name" value="LYASE BETA SUBUNIT, PUTATIVE (AFU_ORTHOLOGUE AFUA_4G13030)-RELATED"/>
    <property type="match status" value="1"/>
</dbReference>
<dbReference type="Pfam" id="PF03328">
    <property type="entry name" value="HpcH_HpaI"/>
    <property type="match status" value="1"/>
</dbReference>
<dbReference type="PIRSF" id="PIRSF015582">
    <property type="entry name" value="Cit_lyase_B"/>
    <property type="match status" value="1"/>
</dbReference>
<dbReference type="SUPFAM" id="SSF51621">
    <property type="entry name" value="Phosphoenolpyruvate/pyruvate domain"/>
    <property type="match status" value="1"/>
</dbReference>
<comment type="function">
    <text evidence="1">Catalyzes the hydrolysis of (3S)-malyl-CoA to (3S)-malate and free CoA. Inactive towards beta-methylmalyl-CoA and other CoA esters (By similarity).</text>
</comment>
<comment type="catalytic activity">
    <reaction>
        <text>(S)-malyl-CoA + H2O = (S)-malate + CoA + H(+)</text>
        <dbReference type="Rhea" id="RHEA:38291"/>
        <dbReference type="ChEBI" id="CHEBI:15377"/>
        <dbReference type="ChEBI" id="CHEBI:15378"/>
        <dbReference type="ChEBI" id="CHEBI:15589"/>
        <dbReference type="ChEBI" id="CHEBI:57287"/>
        <dbReference type="ChEBI" id="CHEBI:57317"/>
        <dbReference type="EC" id="3.1.2.30"/>
    </reaction>
</comment>
<comment type="cofactor">
    <cofactor evidence="2">
        <name>Mg(2+)</name>
        <dbReference type="ChEBI" id="CHEBI:18420"/>
    </cofactor>
</comment>
<comment type="subunit">
    <text evidence="2">Homodimer or homotrimer.</text>
</comment>
<comment type="similarity">
    <text evidence="4">Belongs to the HpcH/HpaI aldolase family.</text>
</comment>
<name>MCTE_CERSK</name>
<sequence>MAHQAHPFRSVLYIPGSKERALEKARGLAADAIIFDLEDAVAHDEKIHARRLLKTTLETADYGHRFRIVRVNGMDTEWGRADLEAFAEAKADAILIPKVSRAADLEAVAALVPDLPLWAMMETAQGMLNAAEIAAHPRLTGMVMGTNDLAKELGSRYRPDRLAMQAGLGLCLLAARAHGLTIVDGVYNAFRDEEGLRAECEQGRDMGFDGKTLIHPAQLEIANAVFSPSPAEIELANRQIAAFEEAERHGQGVAVVDGKIVENLHIVTARQTLAKAEAIAAFRAS</sequence>
<evidence type="ECO:0000250" key="1"/>
<evidence type="ECO:0000250" key="2">
    <source>
        <dbReference type="UniProtKB" id="D3JV05"/>
    </source>
</evidence>
<evidence type="ECO:0000250" key="3">
    <source>
        <dbReference type="UniProtKB" id="Q9RUZ0"/>
    </source>
</evidence>
<evidence type="ECO:0000305" key="4"/>
<evidence type="ECO:0000312" key="5">
    <source>
        <dbReference type="EMBL" id="ACM02222.1"/>
    </source>
</evidence>
<proteinExistence type="inferred from homology"/>
<organism>
    <name type="scientific">Cereibacter sphaeroides (strain KD131 / KCTC 12085)</name>
    <name type="common">Rhodobacter sphaeroides</name>
    <dbReference type="NCBI Taxonomy" id="557760"/>
    <lineage>
        <taxon>Bacteria</taxon>
        <taxon>Pseudomonadati</taxon>
        <taxon>Pseudomonadota</taxon>
        <taxon>Alphaproteobacteria</taxon>
        <taxon>Rhodobacterales</taxon>
        <taxon>Paracoccaceae</taxon>
        <taxon>Cereibacter</taxon>
    </lineage>
</organism>
<protein>
    <recommendedName>
        <fullName evidence="2">(3S)-malyl-CoA thioesterase</fullName>
        <ecNumber>3.1.2.30</ecNumber>
    </recommendedName>
    <alternativeName>
        <fullName evidence="2">(3S)-malyl-CoA thiolesterase</fullName>
    </alternativeName>
</protein>
<accession>B9KNB6</accession>
<feature type="chain" id="PRO_0000405022" description="(3S)-malyl-CoA thioesterase">
    <location>
        <begin position="1"/>
        <end position="285"/>
    </location>
</feature>
<feature type="binding site" evidence="3">
    <location>
        <position position="70"/>
    </location>
    <ligand>
        <name>substrate</name>
    </ligand>
</feature>
<feature type="binding site" evidence="3">
    <location>
        <position position="122"/>
    </location>
    <ligand>
        <name>Mg(2+)</name>
        <dbReference type="ChEBI" id="CHEBI:18420"/>
    </ligand>
</feature>
<feature type="binding site" evidence="3">
    <location>
        <position position="122"/>
    </location>
    <ligand>
        <name>substrate</name>
    </ligand>
</feature>
<feature type="binding site" evidence="3">
    <location>
        <position position="148"/>
    </location>
    <ligand>
        <name>Mg(2+)</name>
        <dbReference type="ChEBI" id="CHEBI:18420"/>
    </ligand>
</feature>
<keyword id="KW-0378">Hydrolase</keyword>
<keyword id="KW-0460">Magnesium</keyword>
<keyword id="KW-0479">Metal-binding</keyword>